<organism evidence="8">
    <name type="scientific">Caenorhabditis elegans</name>
    <dbReference type="NCBI Taxonomy" id="6239"/>
    <lineage>
        <taxon>Eukaryota</taxon>
        <taxon>Metazoa</taxon>
        <taxon>Ecdysozoa</taxon>
        <taxon>Nematoda</taxon>
        <taxon>Chromadorea</taxon>
        <taxon>Rhabditida</taxon>
        <taxon>Rhabditina</taxon>
        <taxon>Rhabditomorpha</taxon>
        <taxon>Rhabditoidea</taxon>
        <taxon>Rhabditidae</taxon>
        <taxon>Peloderinae</taxon>
        <taxon>Caenorhabditis</taxon>
    </lineage>
</organism>
<proteinExistence type="evidence at protein level"/>
<dbReference type="EMBL" id="BX284604">
    <property type="protein sequence ID" value="CCD63562.1"/>
    <property type="molecule type" value="Genomic_DNA"/>
</dbReference>
<dbReference type="EMBL" id="BX284604">
    <property type="protein sequence ID" value="CCD63563.1"/>
    <property type="molecule type" value="Genomic_DNA"/>
</dbReference>
<dbReference type="EMBL" id="BX284604">
    <property type="protein sequence ID" value="CCD63564.1"/>
    <property type="molecule type" value="Genomic_DNA"/>
</dbReference>
<dbReference type="EMBL" id="BX284604">
    <property type="protein sequence ID" value="CCD63565.1"/>
    <property type="molecule type" value="Genomic_DNA"/>
</dbReference>
<dbReference type="EMBL" id="BX284604">
    <property type="protein sequence ID" value="CDM63452.1"/>
    <property type="molecule type" value="Genomic_DNA"/>
</dbReference>
<dbReference type="EMBL" id="BX284604">
    <property type="protein sequence ID" value="CDM63453.1"/>
    <property type="molecule type" value="Genomic_DNA"/>
</dbReference>
<dbReference type="EMBL" id="BX284604">
    <property type="protein sequence ID" value="CDM63454.1"/>
    <property type="molecule type" value="Genomic_DNA"/>
</dbReference>
<dbReference type="EMBL" id="BX284604">
    <property type="protein sequence ID" value="CDM63455.1"/>
    <property type="molecule type" value="Genomic_DNA"/>
</dbReference>
<dbReference type="EMBL" id="BX284604">
    <property type="protein sequence ID" value="CDM63456.1"/>
    <property type="molecule type" value="Genomic_DNA"/>
</dbReference>
<dbReference type="EMBL" id="BX284604">
    <property type="protein sequence ID" value="CDM63457.1"/>
    <property type="molecule type" value="Genomic_DNA"/>
</dbReference>
<dbReference type="RefSeq" id="NP_001023369.1">
    <molecule id="H2KYJ8-4"/>
    <property type="nucleotide sequence ID" value="NM_001028198.5"/>
</dbReference>
<dbReference type="RefSeq" id="NP_001294133.1">
    <molecule id="H2KYJ8-5"/>
    <property type="nucleotide sequence ID" value="NM_001307204.3"/>
</dbReference>
<dbReference type="RefSeq" id="NP_001294134.1">
    <molecule id="H2KYJ8-6"/>
    <property type="nucleotide sequence ID" value="NM_001307205.2"/>
</dbReference>
<dbReference type="RefSeq" id="NP_001294135.1">
    <molecule id="H2KYJ8-7"/>
    <property type="nucleotide sequence ID" value="NM_001307206.3"/>
</dbReference>
<dbReference type="RefSeq" id="NP_001294136.1">
    <molecule id="H2KYJ8-8"/>
    <property type="nucleotide sequence ID" value="NM_001307207.3"/>
</dbReference>
<dbReference type="RefSeq" id="NP_001294137.1">
    <property type="nucleotide sequence ID" value="NM_001307208.1"/>
</dbReference>
<dbReference type="RefSeq" id="NP_001294138.1">
    <property type="nucleotide sequence ID" value="NM_001307209.1"/>
</dbReference>
<dbReference type="RefSeq" id="NP_001368431.1">
    <molecule id="H2KYJ8-9"/>
    <property type="nucleotide sequence ID" value="NM_001380356.1"/>
</dbReference>
<dbReference type="RefSeq" id="NP_001370926.1">
    <molecule id="H2KYJ8-10"/>
    <property type="nucleotide sequence ID" value="NM_001383139.1"/>
</dbReference>
<dbReference type="RefSeq" id="NP_001379637.1">
    <molecule id="H2KYJ8-3"/>
    <property type="nucleotide sequence ID" value="NM_001392346.1"/>
</dbReference>
<dbReference type="RefSeq" id="NP_741462.1">
    <molecule id="H2KYJ8-1"/>
    <property type="nucleotide sequence ID" value="NM_171396.7"/>
</dbReference>
<dbReference type="RefSeq" id="NP_741463.1">
    <molecule id="H2KYJ8-2"/>
    <property type="nucleotide sequence ID" value="NM_171397.8"/>
</dbReference>
<dbReference type="RefSeq" id="NP_741464.1">
    <property type="nucleotide sequence ID" value="NM_171398.4"/>
</dbReference>
<dbReference type="FunCoup" id="H2KYJ8">
    <property type="interactions" value="1510"/>
</dbReference>
<dbReference type="IntAct" id="H2KYJ8">
    <property type="interactions" value="14"/>
</dbReference>
<dbReference type="STRING" id="6239.T09A12.4c.1"/>
<dbReference type="PaxDb" id="6239-T09A12.4c"/>
<dbReference type="EnsemblMetazoa" id="T09A12.4a.1">
    <molecule id="H2KYJ8-2"/>
    <property type="protein sequence ID" value="T09A12.4a.1"/>
    <property type="gene ID" value="WBGene00003656"/>
</dbReference>
<dbReference type="EnsemblMetazoa" id="T09A12.4b.1">
    <molecule id="H2KYJ8-3"/>
    <property type="protein sequence ID" value="T09A12.4b.1"/>
    <property type="gene ID" value="WBGene00003656"/>
</dbReference>
<dbReference type="EnsemblMetazoa" id="T09A12.4c.1">
    <molecule id="H2KYJ8-1"/>
    <property type="protein sequence ID" value="T09A12.4c.1"/>
    <property type="gene ID" value="WBGene00003656"/>
</dbReference>
<dbReference type="EnsemblMetazoa" id="T09A12.4d.1">
    <molecule id="H2KYJ8-4"/>
    <property type="protein sequence ID" value="T09A12.4d.1"/>
    <property type="gene ID" value="WBGene00003656"/>
</dbReference>
<dbReference type="EnsemblMetazoa" id="T09A12.4e.1">
    <molecule id="H2KYJ8-5"/>
    <property type="protein sequence ID" value="T09A12.4e.1"/>
    <property type="gene ID" value="WBGene00003656"/>
</dbReference>
<dbReference type="EnsemblMetazoa" id="T09A12.4f.1">
    <molecule id="H2KYJ8-6"/>
    <property type="protein sequence ID" value="T09A12.4f.1"/>
    <property type="gene ID" value="WBGene00003656"/>
</dbReference>
<dbReference type="EnsemblMetazoa" id="T09A12.4g.1">
    <molecule id="H2KYJ8-7"/>
    <property type="protein sequence ID" value="T09A12.4g.1"/>
    <property type="gene ID" value="WBGene00003656"/>
</dbReference>
<dbReference type="EnsemblMetazoa" id="T09A12.4h.1">
    <molecule id="H2KYJ8-8"/>
    <property type="protein sequence ID" value="T09A12.4h.1"/>
    <property type="gene ID" value="WBGene00003656"/>
</dbReference>
<dbReference type="EnsemblMetazoa" id="T09A12.4i.1">
    <molecule id="H2KYJ8-9"/>
    <property type="protein sequence ID" value="T09A12.4i.1"/>
    <property type="gene ID" value="WBGene00003656"/>
</dbReference>
<dbReference type="EnsemblMetazoa" id="T09A12.4j.1">
    <molecule id="H2KYJ8-10"/>
    <property type="protein sequence ID" value="T09A12.4j.1"/>
    <property type="gene ID" value="WBGene00003656"/>
</dbReference>
<dbReference type="GeneID" id="177618"/>
<dbReference type="KEGG" id="cel:CELE_T09A12.4"/>
<dbReference type="UCSC" id="T09A12.4a.1">
    <property type="organism name" value="c. elegans"/>
</dbReference>
<dbReference type="AGR" id="WB:WBGene00003656"/>
<dbReference type="CTD" id="177618"/>
<dbReference type="WormBase" id="T09A12.4a">
    <molecule id="H2KYJ8-2"/>
    <property type="protein sequence ID" value="CE31061"/>
    <property type="gene ID" value="WBGene00003656"/>
    <property type="gene designation" value="nhr-66"/>
</dbReference>
<dbReference type="WormBase" id="T09A12.4b">
    <molecule id="H2KYJ8-3"/>
    <property type="protein sequence ID" value="CE31062"/>
    <property type="gene ID" value="WBGene00003656"/>
    <property type="gene designation" value="nhr-66"/>
</dbReference>
<dbReference type="WormBase" id="T09A12.4c">
    <molecule id="H2KYJ8-1"/>
    <property type="protein sequence ID" value="CE31063"/>
    <property type="gene ID" value="WBGene00003656"/>
    <property type="gene designation" value="nhr-66"/>
</dbReference>
<dbReference type="WormBase" id="T09A12.4d">
    <molecule id="H2KYJ8-4"/>
    <property type="protein sequence ID" value="CE37723"/>
    <property type="gene ID" value="WBGene00003656"/>
    <property type="gene designation" value="nhr-66"/>
</dbReference>
<dbReference type="WormBase" id="T09A12.4e">
    <molecule id="H2KYJ8-5"/>
    <property type="protein sequence ID" value="CE49570"/>
    <property type="gene ID" value="WBGene00003656"/>
    <property type="gene designation" value="nhr-66"/>
</dbReference>
<dbReference type="WormBase" id="T09A12.4f">
    <molecule id="H2KYJ8-6"/>
    <property type="protein sequence ID" value="CE49535"/>
    <property type="gene ID" value="WBGene00003656"/>
    <property type="gene designation" value="nhr-66"/>
</dbReference>
<dbReference type="WormBase" id="T09A12.4g">
    <molecule id="H2KYJ8-7"/>
    <property type="protein sequence ID" value="CE49513"/>
    <property type="gene ID" value="WBGene00003656"/>
    <property type="gene designation" value="nhr-66"/>
</dbReference>
<dbReference type="WormBase" id="T09A12.4h">
    <molecule id="H2KYJ8-8"/>
    <property type="protein sequence ID" value="CE49608"/>
    <property type="gene ID" value="WBGene00003656"/>
    <property type="gene designation" value="nhr-66"/>
</dbReference>
<dbReference type="WormBase" id="T09A12.4i">
    <molecule id="H2KYJ8-9"/>
    <property type="protein sequence ID" value="CE49550"/>
    <property type="gene ID" value="WBGene00003656"/>
    <property type="gene designation" value="nhr-66"/>
</dbReference>
<dbReference type="WormBase" id="T09A12.4j">
    <molecule id="H2KYJ8-10"/>
    <property type="protein sequence ID" value="CE49515"/>
    <property type="gene ID" value="WBGene00003656"/>
    <property type="gene designation" value="nhr-66"/>
</dbReference>
<dbReference type="eggNOG" id="KOG3575">
    <property type="taxonomic scope" value="Eukaryota"/>
</dbReference>
<dbReference type="HOGENOM" id="CLU_027529_0_0_1"/>
<dbReference type="InParanoid" id="H2KYJ8"/>
<dbReference type="OMA" id="TYIDFTD"/>
<dbReference type="OrthoDB" id="5840137at2759"/>
<dbReference type="PhylomeDB" id="H2KYJ8"/>
<dbReference type="PRO" id="PR:H2KYJ8"/>
<dbReference type="Proteomes" id="UP000001940">
    <property type="component" value="Chromosome IV"/>
</dbReference>
<dbReference type="Bgee" id="WBGene00003656">
    <property type="expression patterns" value="Expressed in pharyngeal muscle cell (C elegans) and 4 other cell types or tissues"/>
</dbReference>
<dbReference type="ExpressionAtlas" id="H2KYJ8">
    <property type="expression patterns" value="baseline and differential"/>
</dbReference>
<dbReference type="GO" id="GO:0005634">
    <property type="term" value="C:nucleus"/>
    <property type="evidence" value="ECO:0007669"/>
    <property type="project" value="UniProtKB-SubCell"/>
</dbReference>
<dbReference type="GO" id="GO:0001227">
    <property type="term" value="F:DNA-binding transcription repressor activity, RNA polymerase II-specific"/>
    <property type="evidence" value="ECO:0000315"/>
    <property type="project" value="UniProtKB"/>
</dbReference>
<dbReference type="GO" id="GO:0000978">
    <property type="term" value="F:RNA polymerase II cis-regulatory region sequence-specific DNA binding"/>
    <property type="evidence" value="ECO:0007669"/>
    <property type="project" value="InterPro"/>
</dbReference>
<dbReference type="GO" id="GO:0000977">
    <property type="term" value="F:RNA polymerase II transcription regulatory region sequence-specific DNA binding"/>
    <property type="evidence" value="ECO:0000315"/>
    <property type="project" value="UniProtKB"/>
</dbReference>
<dbReference type="GO" id="GO:0008270">
    <property type="term" value="F:zinc ion binding"/>
    <property type="evidence" value="ECO:0007669"/>
    <property type="project" value="UniProtKB-KW"/>
</dbReference>
<dbReference type="GO" id="GO:0000122">
    <property type="term" value="P:negative regulation of transcription by RNA polymerase II"/>
    <property type="evidence" value="ECO:0000315"/>
    <property type="project" value="UniProtKB"/>
</dbReference>
<dbReference type="CDD" id="cd06960">
    <property type="entry name" value="NR_DBD_HNF4A"/>
    <property type="match status" value="1"/>
</dbReference>
<dbReference type="Gene3D" id="3.30.50.10">
    <property type="entry name" value="Erythroid Transcription Factor GATA-1, subunit A"/>
    <property type="match status" value="1"/>
</dbReference>
<dbReference type="Gene3D" id="1.10.565.10">
    <property type="entry name" value="Retinoid X Receptor"/>
    <property type="match status" value="1"/>
</dbReference>
<dbReference type="InterPro" id="IPR049636">
    <property type="entry name" value="HNF4-like_DBD"/>
</dbReference>
<dbReference type="InterPro" id="IPR035500">
    <property type="entry name" value="NHR-like_dom_sf"/>
</dbReference>
<dbReference type="InterPro" id="IPR000536">
    <property type="entry name" value="Nucl_hrmn_rcpt_lig-bd"/>
</dbReference>
<dbReference type="InterPro" id="IPR001628">
    <property type="entry name" value="Znf_hrmn_rcpt"/>
</dbReference>
<dbReference type="InterPro" id="IPR013088">
    <property type="entry name" value="Znf_NHR/GATA"/>
</dbReference>
<dbReference type="PANTHER" id="PTHR46011:SF16">
    <property type="entry name" value="NUCLEAR HORMONE RECEPTOR FAMILY MEMBER NHR-66"/>
    <property type="match status" value="1"/>
</dbReference>
<dbReference type="PANTHER" id="PTHR46011">
    <property type="entry name" value="NUCLEAR HORMONE RECEPTOR FAMILY MEMBER NHR-86-RELATED"/>
    <property type="match status" value="1"/>
</dbReference>
<dbReference type="Pfam" id="PF00104">
    <property type="entry name" value="Hormone_recep"/>
    <property type="match status" value="1"/>
</dbReference>
<dbReference type="Pfam" id="PF00105">
    <property type="entry name" value="zf-C4"/>
    <property type="match status" value="1"/>
</dbReference>
<dbReference type="PRINTS" id="PR00047">
    <property type="entry name" value="STROIDFINGER"/>
</dbReference>
<dbReference type="SMART" id="SM00430">
    <property type="entry name" value="HOLI"/>
    <property type="match status" value="1"/>
</dbReference>
<dbReference type="SMART" id="SM00399">
    <property type="entry name" value="ZnF_C4"/>
    <property type="match status" value="1"/>
</dbReference>
<dbReference type="SUPFAM" id="SSF57716">
    <property type="entry name" value="Glucocorticoid receptor-like (DNA-binding domain)"/>
    <property type="match status" value="1"/>
</dbReference>
<dbReference type="SUPFAM" id="SSF48508">
    <property type="entry name" value="Nuclear receptor ligand-binding domain"/>
    <property type="match status" value="1"/>
</dbReference>
<dbReference type="PROSITE" id="PS51843">
    <property type="entry name" value="NR_LBD"/>
    <property type="match status" value="1"/>
</dbReference>
<dbReference type="PROSITE" id="PS00031">
    <property type="entry name" value="NUCLEAR_REC_DBD_1"/>
    <property type="match status" value="1"/>
</dbReference>
<dbReference type="PROSITE" id="PS51030">
    <property type="entry name" value="NUCLEAR_REC_DBD_2"/>
    <property type="match status" value="1"/>
</dbReference>
<name>NHR66_CAEEL</name>
<feature type="chain" id="PRO_0000456432" description="Nuclear hormone receptor family member nhr-66">
    <location>
        <begin position="1"/>
        <end position="733"/>
    </location>
</feature>
<feature type="domain" description="NR LBD" evidence="2">
    <location>
        <begin position="444"/>
        <end position="687"/>
    </location>
</feature>
<feature type="DNA-binding region" description="Nuclear receptor" evidence="1">
    <location>
        <begin position="266"/>
        <end position="343"/>
    </location>
</feature>
<feature type="zinc finger region" description="NR C4-type" evidence="1">
    <location>
        <begin position="269"/>
        <end position="289"/>
    </location>
</feature>
<feature type="zinc finger region" description="NR C4-type" evidence="1">
    <location>
        <begin position="305"/>
        <end position="326"/>
    </location>
</feature>
<feature type="region of interest" description="Disordered" evidence="4">
    <location>
        <begin position="113"/>
        <end position="190"/>
    </location>
</feature>
<feature type="region of interest" description="Disordered" evidence="4">
    <location>
        <begin position="361"/>
        <end position="396"/>
    </location>
</feature>
<feature type="region of interest" description="AF-2" evidence="2">
    <location>
        <begin position="676"/>
        <end position="687"/>
    </location>
</feature>
<feature type="region of interest" description="Disordered" evidence="4">
    <location>
        <begin position="691"/>
        <end position="733"/>
    </location>
</feature>
<feature type="compositionally biased region" description="Low complexity" evidence="4">
    <location>
        <begin position="113"/>
        <end position="130"/>
    </location>
</feature>
<feature type="compositionally biased region" description="Low complexity" evidence="4">
    <location>
        <begin position="165"/>
        <end position="185"/>
    </location>
</feature>
<feature type="compositionally biased region" description="Low complexity" evidence="4">
    <location>
        <begin position="371"/>
        <end position="382"/>
    </location>
</feature>
<feature type="splice variant" id="VSP_061620" description="In isoform e and isoform i." evidence="7">
    <location>
        <begin position="1"/>
        <end position="214"/>
    </location>
</feature>
<feature type="splice variant" id="VSP_061621" description="In isoform b and isoform j." evidence="7">
    <original>MPPINEPTATTTSASSVWQGMTQLKSQVDLINIARGILSTPATTSTSCLDIQNSTPIIGSLASGKSQTPILTATMTPQIGLTGLGSLTSLPPELLLQFARLDGFNLLPAVGSPAIPSSSSCSEPSTSQASTVVSAPTLPPPSPLTSLPQKPAPLMPSGHVTTVDQQNRQQHQQQQRQQQQAQQQNSMARKYSMDTIQHHTMQHPHQLQYIPNH</original>
    <variation>MDVIRLLD</variation>
    <location>
        <begin position="1"/>
        <end position="213"/>
    </location>
</feature>
<feature type="splice variant" id="VSP_061622" description="In isoform a and isoform h." evidence="7">
    <location>
        <begin position="1"/>
        <end position="154"/>
    </location>
</feature>
<feature type="splice variant" id="VSP_061623" description="In isoform d and isoform g." evidence="7">
    <location>
        <begin position="1"/>
        <end position="74"/>
    </location>
</feature>
<feature type="splice variant" id="VSP_061624" description="In isoform a, isoform b, isoform f, isoform g and isoform i." evidence="7">
    <location>
        <begin position="241"/>
        <end position="242"/>
    </location>
</feature>
<evidence type="ECO:0000255" key="1">
    <source>
        <dbReference type="PROSITE-ProRule" id="PRU00407"/>
    </source>
</evidence>
<evidence type="ECO:0000255" key="2">
    <source>
        <dbReference type="PROSITE-ProRule" id="PRU01189"/>
    </source>
</evidence>
<evidence type="ECO:0000255" key="3">
    <source>
        <dbReference type="RuleBase" id="RU004334"/>
    </source>
</evidence>
<evidence type="ECO:0000256" key="4">
    <source>
        <dbReference type="SAM" id="MobiDB-lite"/>
    </source>
</evidence>
<evidence type="ECO:0000269" key="5">
    <source>
    </source>
</evidence>
<evidence type="ECO:0000269" key="6">
    <source>
    </source>
</evidence>
<evidence type="ECO:0000305" key="7"/>
<evidence type="ECO:0000312" key="8">
    <source>
        <dbReference type="Proteomes" id="UP000001940"/>
    </source>
</evidence>
<evidence type="ECO:0000312" key="9">
    <source>
        <dbReference type="WormBase" id="T09A12.4a"/>
    </source>
</evidence>
<evidence type="ECO:0000312" key="10">
    <source>
        <dbReference type="WormBase" id="T09A12.4b"/>
    </source>
</evidence>
<evidence type="ECO:0000312" key="11">
    <source>
        <dbReference type="WormBase" id="T09A12.4c"/>
    </source>
</evidence>
<evidence type="ECO:0000312" key="12">
    <source>
        <dbReference type="WormBase" id="T09A12.4d"/>
    </source>
</evidence>
<evidence type="ECO:0000312" key="13">
    <source>
        <dbReference type="WormBase" id="T09A12.4e"/>
    </source>
</evidence>
<evidence type="ECO:0000312" key="14">
    <source>
        <dbReference type="WormBase" id="T09A12.4f"/>
    </source>
</evidence>
<evidence type="ECO:0000312" key="15">
    <source>
        <dbReference type="WormBase" id="T09A12.4g"/>
    </source>
</evidence>
<evidence type="ECO:0000312" key="16">
    <source>
        <dbReference type="WormBase" id="T09A12.4h"/>
    </source>
</evidence>
<evidence type="ECO:0000312" key="17">
    <source>
        <dbReference type="WormBase" id="T09A12.4i"/>
    </source>
</evidence>
<evidence type="ECO:0000312" key="18">
    <source>
        <dbReference type="WormBase" id="T09A12.4j"/>
    </source>
</evidence>
<protein>
    <recommendedName>
        <fullName evidence="11">Nuclear hormone receptor family member nhr-66</fullName>
    </recommendedName>
</protein>
<accession>H2KYJ8</accession>
<accession>H2KYJ7</accession>
<accession>Q5W611</accession>
<accession>Q8MXH0</accession>
<accession>W6RQQ7</accession>
<accession>W6RRP4</accession>
<accession>W6RT69</accession>
<accession>W6RT76</accession>
<accession>W6RXQ9</accession>
<accession>W6SB62</accession>
<gene>
    <name evidence="11" type="primary">nhr-66</name>
    <name evidence="11" type="ORF">T09A12.4</name>
</gene>
<sequence length="733" mass="80772">MPPINEPTATTTSASSVWQGMTQLKSQVDLINIARGILSTPATTSTSCLDIQNSTPIIGSLASGKSQTPILTATMTPQIGLTGLGSLTSLPPELLLQFARLDGFNLLPAVGSPAIPSSSSCSEPSTSQASTVVSAPTLPPPSPLTSLPQKPAPLMPSGHVTTVDQQNRQQHQQQQRQQQQAQQQNSMARKYSMDTIQHHTMQHPHQLQYIPNHFMTASTDVFAAMDMSQKQSSPPGIFKIVAAKNEPSSSSNSQPGTPAMGDRRAVPACAICGTDSTGIHFGVDACAACSAFFRRTVVLNKDYSCNKGGKCTVVKDGSAGQKCRACRFRKCISSGMDKNSVQHRRDAIGKYSAGVKRELSPDAEFEPSAKVSTVSEPSTSSGPSGGFNQNVSSPAGIPRVPSTLRTTQASTCMNSACGQKSVLHELICRQNFLTEQRQLFYAGCLGDWFRKPSSIENQTLSELTDFSSCMFHLWKIEPRLAADFMNRNRYLDPLPIVEKLKIYRNFVIMRQSVEEPYLTWRHGGLEKRWFVMPNNTYIDFNNIAKYFENGALKDLKLDYETTTNLFLPSFTHAMDTIGEKMKKNNITETELTILLGLVLLDPGIYGIHESTRKFLKRIRDQLIHDVYMYYEDEMSHLYDPEIRMADIFMLVAAIKIHSIKTSENMHMLRVFDLIPADACFNQMLDVESVNVSPDGQKDSEAEQGPSPVSVPEAARGSYQDDDMPPVLEKNCDL</sequence>
<comment type="function">
    <text evidence="5 6">Transcription factor (PubMed:33259792). Binds to regulatory elements and regulates transcription of target genes, including the potassium channel accessory subunit mps-2 (PubMed:33259792). Negatively regulates transcription of mps-2, thereby modulating age-dependent memory decline (PubMed:33259792). In concert with nuclear hormone receptor nhr-49, involved in regulating target genes with roles in sphingolipid breakdown and lipid remodeling (PubMed:22511885). Plays a role in modulating mitochondrial morphology and function (PubMed:22511885).</text>
</comment>
<comment type="subunit">
    <text evidence="5">Interacts with nuclear hormone receptor nhr-49; the interaction is direct.</text>
</comment>
<comment type="subcellular location">
    <subcellularLocation>
        <location evidence="3">Nucleus</location>
    </subcellularLocation>
</comment>
<comment type="alternative products">
    <event type="alternative splicing"/>
    <isoform>
        <id>H2KYJ8-1</id>
        <name evidence="11">c</name>
        <sequence type="displayed"/>
    </isoform>
    <isoform>
        <id>H2KYJ8-2</id>
        <name evidence="9">a</name>
        <sequence type="described" ref="VSP_061622 VSP_061624"/>
    </isoform>
    <isoform>
        <id>H2KYJ8-3</id>
        <name evidence="10">b</name>
        <sequence type="described" ref="VSP_061621 VSP_061624"/>
    </isoform>
    <isoform>
        <id>H2KYJ8-4</id>
        <name evidence="12">d</name>
        <sequence type="described" ref="VSP_061623"/>
    </isoform>
    <isoform>
        <id>H2KYJ8-5</id>
        <name evidence="13">e</name>
        <sequence type="described" ref="VSP_061620"/>
    </isoform>
    <isoform>
        <id>H2KYJ8-6</id>
        <name evidence="14">f</name>
        <sequence type="described" ref="VSP_061624"/>
    </isoform>
    <isoform>
        <id>H2KYJ8-7</id>
        <name evidence="15">g</name>
        <sequence type="described" ref="VSP_061623 VSP_061624"/>
    </isoform>
    <isoform>
        <id>H2KYJ8-8</id>
        <name evidence="16">h</name>
        <sequence type="described" ref="VSP_061622"/>
    </isoform>
    <isoform>
        <id>H2KYJ8-9</id>
        <name evidence="17">i</name>
        <sequence type="described" ref="VSP_061620 VSP_061624"/>
    </isoform>
    <isoform>
        <id>H2KYJ8-10</id>
        <name evidence="18">j</name>
        <sequence type="described" ref="VSP_061621"/>
    </isoform>
</comment>
<comment type="tissue specificity">
    <text evidence="6">Widely expressed, including in hypodermis, gut, muscle, and neuronal cells of the ventral nerve cord, head, and tail ganglia (PubMed:33259792). Expressed in the head ganglion in several sensory and interneurons, including AVA (PubMed:33259792).</text>
</comment>
<comment type="disruption phenotype">
    <text evidence="6">RNAi-mediated knockdown increases expression of potassium channel accessory subunit mps-2 and suppresses age-dependent memory decline.</text>
</comment>
<comment type="similarity">
    <text evidence="3 7">Belongs to the nuclear hormone receptor family.</text>
</comment>
<reference evidence="8" key="1">
    <citation type="journal article" date="1998" name="Science">
        <title>Genome sequence of the nematode C. elegans: a platform for investigating biology.</title>
        <authorList>
            <consortium name="The C. elegans sequencing consortium"/>
        </authorList>
    </citation>
    <scope>NUCLEOTIDE SEQUENCE [LARGE SCALE GENOMIC DNA]</scope>
    <source>
        <strain evidence="8">Bristol N2</strain>
    </source>
</reference>
<reference evidence="7" key="2">
    <citation type="journal article" date="2012" name="PLoS Genet.">
        <title>Coordinate regulation of lipid metabolism by novel nuclear receptor partnerships.</title>
        <authorList>
            <person name="Pathare P.P."/>
            <person name="Lin A."/>
            <person name="Bornfeldt K.E."/>
            <person name="Taubert S."/>
            <person name="Van Gilst M.R."/>
        </authorList>
    </citation>
    <scope>FUNCTION</scope>
    <scope>INTERACTION WITH NHR-49</scope>
</reference>
<reference evidence="7" key="3">
    <citation type="journal article" date="2021" name="Curr. Biol.">
        <title>Dual Role of an mps-2/KCNE-Dependent Pathway in Long-Term Memory and Age-Dependent Memory Decline.</title>
        <authorList>
            <person name="Fenyves B.G."/>
            <person name="Arnold A."/>
            <person name="Gharat V.G."/>
            <person name="Haab C."/>
            <person name="Tishinov K."/>
            <person name="Peter F."/>
            <person name="de Quervain D."/>
            <person name="Papassotiropoulos A."/>
            <person name="Stetak A."/>
        </authorList>
    </citation>
    <scope>FUNCTION</scope>
    <scope>TISSUE SPECIFICITY</scope>
    <scope>DISRUPTION PHENOTYPE</scope>
</reference>
<keyword id="KW-0025">Alternative splicing</keyword>
<keyword id="KW-0238">DNA-binding</keyword>
<keyword id="KW-0479">Metal-binding</keyword>
<keyword id="KW-0539">Nucleus</keyword>
<keyword id="KW-0675">Receptor</keyword>
<keyword id="KW-1185">Reference proteome</keyword>
<keyword id="KW-0804">Transcription</keyword>
<keyword id="KW-0805">Transcription regulation</keyword>
<keyword id="KW-0862">Zinc</keyword>
<keyword id="KW-0863">Zinc-finger</keyword>